<comment type="catalytic activity">
    <reaction evidence="1">
        <text>tRNA(Asn) + L-asparagine + ATP = L-asparaginyl-tRNA(Asn) + AMP + diphosphate + H(+)</text>
        <dbReference type="Rhea" id="RHEA:11180"/>
        <dbReference type="Rhea" id="RHEA-COMP:9659"/>
        <dbReference type="Rhea" id="RHEA-COMP:9674"/>
        <dbReference type="ChEBI" id="CHEBI:15378"/>
        <dbReference type="ChEBI" id="CHEBI:30616"/>
        <dbReference type="ChEBI" id="CHEBI:33019"/>
        <dbReference type="ChEBI" id="CHEBI:58048"/>
        <dbReference type="ChEBI" id="CHEBI:78442"/>
        <dbReference type="ChEBI" id="CHEBI:78515"/>
        <dbReference type="ChEBI" id="CHEBI:456215"/>
        <dbReference type="EC" id="6.1.1.22"/>
    </reaction>
</comment>
<comment type="subunit">
    <text evidence="1">Homodimer.</text>
</comment>
<comment type="subcellular location">
    <subcellularLocation>
        <location evidence="1">Cytoplasm</location>
    </subcellularLocation>
</comment>
<comment type="similarity">
    <text evidence="1">Belongs to the class-II aminoacyl-tRNA synthetase family.</text>
</comment>
<comment type="sequence caution" evidence="2">
    <conflict type="erroneous initiation">
        <sequence resource="EMBL-CDS" id="BAA10844"/>
    </conflict>
</comment>
<reference key="1">
    <citation type="journal article" date="1995" name="DNA Res.">
        <title>Sequence analysis of the genome of the unicellular cyanobacterium Synechocystis sp. strain PCC6803. I. Sequence features in the 1 Mb region from map positions 64% to 92% of the genome.</title>
        <authorList>
            <person name="Kaneko T."/>
            <person name="Tanaka A."/>
            <person name="Sato S."/>
            <person name="Kotani H."/>
            <person name="Sazuka T."/>
            <person name="Miyajima N."/>
            <person name="Sugiura M."/>
            <person name="Tabata S."/>
        </authorList>
    </citation>
    <scope>NUCLEOTIDE SEQUENCE [LARGE SCALE GENOMIC DNA]</scope>
    <source>
        <strain>ATCC 27184 / PCC 6803 / N-1</strain>
    </source>
</reference>
<reference key="2">
    <citation type="journal article" date="1996" name="DNA Res.">
        <title>Sequence analysis of the genome of the unicellular cyanobacterium Synechocystis sp. strain PCC6803. II. Sequence determination of the entire genome and assignment of potential protein-coding regions.</title>
        <authorList>
            <person name="Kaneko T."/>
            <person name="Sato S."/>
            <person name="Kotani H."/>
            <person name="Tanaka A."/>
            <person name="Asamizu E."/>
            <person name="Nakamura Y."/>
            <person name="Miyajima N."/>
            <person name="Hirosawa M."/>
            <person name="Sugiura M."/>
            <person name="Sasamoto S."/>
            <person name="Kimura T."/>
            <person name="Hosouchi T."/>
            <person name="Matsuno A."/>
            <person name="Muraki A."/>
            <person name="Nakazaki N."/>
            <person name="Naruo K."/>
            <person name="Okumura S."/>
            <person name="Shimpo S."/>
            <person name="Takeuchi C."/>
            <person name="Wada T."/>
            <person name="Watanabe A."/>
            <person name="Yamada M."/>
            <person name="Yasuda M."/>
            <person name="Tabata S."/>
        </authorList>
    </citation>
    <scope>NUCLEOTIDE SEQUENCE [LARGE SCALE GENOMIC DNA]</scope>
    <source>
        <strain>ATCC 27184 / PCC 6803 / Kazusa</strain>
    </source>
</reference>
<keyword id="KW-0030">Aminoacyl-tRNA synthetase</keyword>
<keyword id="KW-0067">ATP-binding</keyword>
<keyword id="KW-0963">Cytoplasm</keyword>
<keyword id="KW-0436">Ligase</keyword>
<keyword id="KW-0547">Nucleotide-binding</keyword>
<keyword id="KW-0648">Protein biosynthesis</keyword>
<keyword id="KW-1185">Reference proteome</keyword>
<name>SYN_SYNY3</name>
<proteinExistence type="inferred from homology"/>
<protein>
    <recommendedName>
        <fullName evidence="1">Asparagine--tRNA ligase</fullName>
        <ecNumber evidence="1">6.1.1.22</ecNumber>
    </recommendedName>
    <alternativeName>
        <fullName evidence="1">Asparaginyl-tRNA synthetase</fullName>
        <shortName evidence="1">AsnRS</shortName>
    </alternativeName>
</protein>
<accession>P52276</accession>
<sequence>MNKRRIIEVLRHGQADDQVMVQGWLRTKRTLKDFSFVEVNDGSSLANLQVVLDGSLADYDRLLSQLQTGAALVVEGKLAPSPGKGQRVELKATKLELLGGADPGSYPLQKKRHSFEFLRTIGHLRPRTNTIGAVMRVRNACATAIHQFFQERGFLWVHTPIITASDCEGAGDLFKVTTLDLQRVPKNGEGIDYSQDFFGKQAYLTVSGQLEAEVMALAFQNVYTFGPTFRAENSNTSRHLAEFWMVEPEMAFCDLEGDRQWAEEFLKYIFKFVLEKCPEDMEFFDQRIDNTVLATADNIINNEFAWLTYSEAIKLLEKADQKFEYPVAWGVDLQSEHERYLAETVFKRPTIVTDYPKDIKAFYMRLNDDGKTVAAMDILAPKIGEIIGGSQREERLDILTQRMQEQGVPEEDLWWYLDLRRYGSVPHAGFGLGFERIVQFMTGMANIRDVIPFPRTPMNAEF</sequence>
<dbReference type="EC" id="6.1.1.22" evidence="1"/>
<dbReference type="EMBL" id="BA000022">
    <property type="protein sequence ID" value="BAA10844.1"/>
    <property type="status" value="ALT_INIT"/>
    <property type="molecule type" value="Genomic_DNA"/>
</dbReference>
<dbReference type="PIR" id="S75997">
    <property type="entry name" value="S75997"/>
</dbReference>
<dbReference type="SMR" id="P52276"/>
<dbReference type="FunCoup" id="P52276">
    <property type="interactions" value="390"/>
</dbReference>
<dbReference type="IntAct" id="P52276">
    <property type="interactions" value="1"/>
</dbReference>
<dbReference type="STRING" id="1148.gene:10500348"/>
<dbReference type="PaxDb" id="1148-1001357"/>
<dbReference type="EnsemblBacteria" id="BAA10844">
    <property type="protein sequence ID" value="BAA10844"/>
    <property type="gene ID" value="BAA10844"/>
</dbReference>
<dbReference type="KEGG" id="syn:sll0495"/>
<dbReference type="eggNOG" id="COG0017">
    <property type="taxonomic scope" value="Bacteria"/>
</dbReference>
<dbReference type="InParanoid" id="P52276"/>
<dbReference type="PhylomeDB" id="P52276"/>
<dbReference type="Proteomes" id="UP000001425">
    <property type="component" value="Chromosome"/>
</dbReference>
<dbReference type="GO" id="GO:0005737">
    <property type="term" value="C:cytoplasm"/>
    <property type="evidence" value="ECO:0007669"/>
    <property type="project" value="UniProtKB-SubCell"/>
</dbReference>
<dbReference type="GO" id="GO:0004816">
    <property type="term" value="F:asparagine-tRNA ligase activity"/>
    <property type="evidence" value="ECO:0000318"/>
    <property type="project" value="GO_Central"/>
</dbReference>
<dbReference type="GO" id="GO:0005524">
    <property type="term" value="F:ATP binding"/>
    <property type="evidence" value="ECO:0007669"/>
    <property type="project" value="UniProtKB-UniRule"/>
</dbReference>
<dbReference type="GO" id="GO:0003676">
    <property type="term" value="F:nucleic acid binding"/>
    <property type="evidence" value="ECO:0007669"/>
    <property type="project" value="InterPro"/>
</dbReference>
<dbReference type="GO" id="GO:0006421">
    <property type="term" value="P:asparaginyl-tRNA aminoacylation"/>
    <property type="evidence" value="ECO:0000318"/>
    <property type="project" value="GO_Central"/>
</dbReference>
<dbReference type="CDD" id="cd00776">
    <property type="entry name" value="AsxRS_core"/>
    <property type="match status" value="1"/>
</dbReference>
<dbReference type="CDD" id="cd04318">
    <property type="entry name" value="EcAsnRS_like_N"/>
    <property type="match status" value="1"/>
</dbReference>
<dbReference type="FunFam" id="3.30.930.10:FF:000016">
    <property type="entry name" value="Asparagine--tRNA ligase"/>
    <property type="match status" value="1"/>
</dbReference>
<dbReference type="Gene3D" id="3.30.930.10">
    <property type="entry name" value="Bira Bifunctional Protein, Domain 2"/>
    <property type="match status" value="1"/>
</dbReference>
<dbReference type="Gene3D" id="2.40.50.140">
    <property type="entry name" value="Nucleic acid-binding proteins"/>
    <property type="match status" value="1"/>
</dbReference>
<dbReference type="HAMAP" id="MF_00534">
    <property type="entry name" value="Asn_tRNA_synth"/>
    <property type="match status" value="1"/>
</dbReference>
<dbReference type="InterPro" id="IPR004364">
    <property type="entry name" value="Aa-tRNA-synt_II"/>
</dbReference>
<dbReference type="InterPro" id="IPR006195">
    <property type="entry name" value="aa-tRNA-synth_II"/>
</dbReference>
<dbReference type="InterPro" id="IPR045864">
    <property type="entry name" value="aa-tRNA-synth_II/BPL/LPL"/>
</dbReference>
<dbReference type="InterPro" id="IPR004522">
    <property type="entry name" value="Asn-tRNA-ligase"/>
</dbReference>
<dbReference type="InterPro" id="IPR002312">
    <property type="entry name" value="Asp/Asn-tRNA-synth_IIb"/>
</dbReference>
<dbReference type="InterPro" id="IPR012340">
    <property type="entry name" value="NA-bd_OB-fold"/>
</dbReference>
<dbReference type="InterPro" id="IPR004365">
    <property type="entry name" value="NA-bd_OB_tRNA"/>
</dbReference>
<dbReference type="NCBIfam" id="TIGR00457">
    <property type="entry name" value="asnS"/>
    <property type="match status" value="1"/>
</dbReference>
<dbReference type="NCBIfam" id="NF003037">
    <property type="entry name" value="PRK03932.1"/>
    <property type="match status" value="1"/>
</dbReference>
<dbReference type="PANTHER" id="PTHR22594:SF34">
    <property type="entry name" value="ASPARAGINE--TRNA LIGASE, MITOCHONDRIAL-RELATED"/>
    <property type="match status" value="1"/>
</dbReference>
<dbReference type="PANTHER" id="PTHR22594">
    <property type="entry name" value="ASPARTYL/LYSYL-TRNA SYNTHETASE"/>
    <property type="match status" value="1"/>
</dbReference>
<dbReference type="Pfam" id="PF00152">
    <property type="entry name" value="tRNA-synt_2"/>
    <property type="match status" value="1"/>
</dbReference>
<dbReference type="Pfam" id="PF01336">
    <property type="entry name" value="tRNA_anti-codon"/>
    <property type="match status" value="1"/>
</dbReference>
<dbReference type="PRINTS" id="PR01042">
    <property type="entry name" value="TRNASYNTHASP"/>
</dbReference>
<dbReference type="SUPFAM" id="SSF55681">
    <property type="entry name" value="Class II aaRS and biotin synthetases"/>
    <property type="match status" value="1"/>
</dbReference>
<dbReference type="SUPFAM" id="SSF50249">
    <property type="entry name" value="Nucleic acid-binding proteins"/>
    <property type="match status" value="1"/>
</dbReference>
<dbReference type="PROSITE" id="PS50862">
    <property type="entry name" value="AA_TRNA_LIGASE_II"/>
    <property type="match status" value="1"/>
</dbReference>
<feature type="chain" id="PRO_0000176468" description="Asparagine--tRNA ligase">
    <location>
        <begin position="1"/>
        <end position="462"/>
    </location>
</feature>
<gene>
    <name evidence="1" type="primary">asnS</name>
    <name type="ordered locus">sll0495</name>
</gene>
<organism>
    <name type="scientific">Synechocystis sp. (strain ATCC 27184 / PCC 6803 / Kazusa)</name>
    <dbReference type="NCBI Taxonomy" id="1111708"/>
    <lineage>
        <taxon>Bacteria</taxon>
        <taxon>Bacillati</taxon>
        <taxon>Cyanobacteriota</taxon>
        <taxon>Cyanophyceae</taxon>
        <taxon>Synechococcales</taxon>
        <taxon>Merismopediaceae</taxon>
        <taxon>Synechocystis</taxon>
    </lineage>
</organism>
<evidence type="ECO:0000255" key="1">
    <source>
        <dbReference type="HAMAP-Rule" id="MF_00534"/>
    </source>
</evidence>
<evidence type="ECO:0000305" key="2"/>